<accession>Q01230</accession>
<accession>Q80HT8</accession>
<feature type="chain" id="PRO_0000170657" description="Guanylate kinase homolog">
    <location>
        <begin position="1"/>
        <end position="151"/>
    </location>
</feature>
<feature type="domain" description="Guanylate kinase-like" evidence="1">
    <location>
        <begin position="1"/>
        <end position="141"/>
    </location>
</feature>
<reference key="1">
    <citation type="journal article" date="1991" name="J. Gen. Virol.">
        <title>Nucleotide sequence of 42 kbp of vaccinia virus strain WR from near the right inverted terminal repeat.</title>
        <authorList>
            <person name="Smith G.L."/>
            <person name="Chan Y.S."/>
            <person name="Howard S.T."/>
        </authorList>
    </citation>
    <scope>NUCLEOTIDE SEQUENCE [GENOMIC DNA]</scope>
</reference>
<reference key="2">
    <citation type="submission" date="2003-02" db="EMBL/GenBank/DDBJ databases">
        <title>Sequencing of the coding region of Vaccinia-WR to an average 9-fold redundancy and an error rate of 0.16/10kb.</title>
        <authorList>
            <person name="Esposito J.J."/>
            <person name="Frace A.M."/>
            <person name="Sammons S.A."/>
            <person name="Olsen-Rasmussen M."/>
            <person name="Osborne J."/>
            <person name="Wohlhueter R."/>
        </authorList>
    </citation>
    <scope>NUCLEOTIDE SEQUENCE [LARGE SCALE GENOMIC DNA]</scope>
</reference>
<proteinExistence type="inferred from homology"/>
<sequence>MEREGVDYHYVNREAIWKGIAAGNFLEHTEFLGNIYGTSKTAVNTAAINNRICVMDLNIDGVRSLKNTYLMPYSVYIRPTSLKMVETKLRCRNTEANDEIHRRVILAKTDMDEANEAGLFDTIIIEDDVNLAYSKLIQILQDRIRMYFNTN</sequence>
<organismHost>
    <name type="scientific">Bos taurus</name>
    <name type="common">Bovine</name>
    <dbReference type="NCBI Taxonomy" id="9913"/>
</organismHost>
<dbReference type="EMBL" id="D11079">
    <property type="protein sequence ID" value="BAA01830.1"/>
    <property type="molecule type" value="Genomic_DNA"/>
</dbReference>
<dbReference type="EMBL" id="AY243312">
    <property type="protein sequence ID" value="AAO89461.1"/>
    <property type="molecule type" value="Genomic_DNA"/>
</dbReference>
<dbReference type="PIR" id="JQ1794">
    <property type="entry name" value="JQ1794"/>
</dbReference>
<dbReference type="RefSeq" id="YP_233064.1">
    <property type="nucleotide sequence ID" value="NC_006998.1"/>
</dbReference>
<dbReference type="SMR" id="Q01230"/>
<dbReference type="DNASU" id="3707653"/>
<dbReference type="GeneID" id="3707653"/>
<dbReference type="KEGG" id="vg:3707653"/>
<dbReference type="Proteomes" id="UP000000344">
    <property type="component" value="Genome"/>
</dbReference>
<dbReference type="GO" id="GO:0004385">
    <property type="term" value="F:guanylate kinase activity"/>
    <property type="evidence" value="ECO:0007669"/>
    <property type="project" value="TreeGrafter"/>
</dbReference>
<dbReference type="CDD" id="cd00071">
    <property type="entry name" value="GMPK"/>
    <property type="match status" value="1"/>
</dbReference>
<dbReference type="Gene3D" id="3.40.50.300">
    <property type="entry name" value="P-loop containing nucleotide triphosphate hydrolases"/>
    <property type="match status" value="1"/>
</dbReference>
<dbReference type="InterPro" id="IPR008145">
    <property type="entry name" value="GK/Ca_channel_bsu"/>
</dbReference>
<dbReference type="InterPro" id="IPR008144">
    <property type="entry name" value="Guanylate_kin-like_dom"/>
</dbReference>
<dbReference type="InterPro" id="IPR027417">
    <property type="entry name" value="P-loop_NTPase"/>
</dbReference>
<dbReference type="PANTHER" id="PTHR23117:SF13">
    <property type="entry name" value="GUANYLATE KINASE"/>
    <property type="match status" value="1"/>
</dbReference>
<dbReference type="PANTHER" id="PTHR23117">
    <property type="entry name" value="GUANYLATE KINASE-RELATED"/>
    <property type="match status" value="1"/>
</dbReference>
<dbReference type="Pfam" id="PF00625">
    <property type="entry name" value="Guanylate_kin"/>
    <property type="match status" value="1"/>
</dbReference>
<dbReference type="SMART" id="SM00072">
    <property type="entry name" value="GuKc"/>
    <property type="match status" value="1"/>
</dbReference>
<dbReference type="SUPFAM" id="SSF52540">
    <property type="entry name" value="P-loop containing nucleoside triphosphate hydrolases"/>
    <property type="match status" value="1"/>
</dbReference>
<dbReference type="PROSITE" id="PS50052">
    <property type="entry name" value="GUANYLATE_KINASE_2"/>
    <property type="match status" value="1"/>
</dbReference>
<evidence type="ECO:0000255" key="1">
    <source>
        <dbReference type="PROSITE-ProRule" id="PRU00100"/>
    </source>
</evidence>
<evidence type="ECO:0000305" key="2"/>
<protein>
    <recommendedName>
        <fullName>Guanylate kinase homolog</fullName>
    </recommendedName>
</protein>
<organism>
    <name type="scientific">Vaccinia virus (strain Western Reserve)</name>
    <name type="common">VACV</name>
    <name type="synonym">Vaccinia virus (strain WR)</name>
    <dbReference type="NCBI Taxonomy" id="10254"/>
    <lineage>
        <taxon>Viruses</taxon>
        <taxon>Varidnaviria</taxon>
        <taxon>Bamfordvirae</taxon>
        <taxon>Nucleocytoviricota</taxon>
        <taxon>Pokkesviricetes</taxon>
        <taxon>Chitovirales</taxon>
        <taxon>Poxviridae</taxon>
        <taxon>Chordopoxvirinae</taxon>
        <taxon>Orthopoxvirus</taxon>
        <taxon>Vaccinia virus</taxon>
    </lineage>
</organism>
<comment type="similarity">
    <text evidence="2">Belongs to the guanylate kinase family.</text>
</comment>
<name>A57_VACCW</name>
<gene>
    <name type="ordered locus">VACWR182</name>
    <name type="ORF">A57R</name>
</gene>
<keyword id="KW-0418">Kinase</keyword>
<keyword id="KW-1185">Reference proteome</keyword>
<keyword id="KW-0808">Transferase</keyword>